<reference key="1">
    <citation type="submission" date="2002-12" db="EMBL/GenBank/DDBJ databases">
        <title>Complete genome sequence of Vibrio vulnificus CMCP6.</title>
        <authorList>
            <person name="Rhee J.H."/>
            <person name="Kim S.Y."/>
            <person name="Chung S.S."/>
            <person name="Kim J.J."/>
            <person name="Moon Y.H."/>
            <person name="Jeong H."/>
            <person name="Choy H.E."/>
        </authorList>
    </citation>
    <scope>NUCLEOTIDE SEQUENCE [LARGE SCALE GENOMIC DNA]</scope>
    <source>
        <strain>CMCP6</strain>
    </source>
</reference>
<name>RL34_VIBVU</name>
<evidence type="ECO:0000255" key="1">
    <source>
        <dbReference type="HAMAP-Rule" id="MF_00391"/>
    </source>
</evidence>
<evidence type="ECO:0000305" key="2"/>
<feature type="chain" id="PRO_0000187502" description="Large ribosomal subunit protein bL34">
    <location>
        <begin position="1"/>
        <end position="46"/>
    </location>
</feature>
<protein>
    <recommendedName>
        <fullName evidence="1">Large ribosomal subunit protein bL34</fullName>
    </recommendedName>
    <alternativeName>
        <fullName evidence="2">50S ribosomal protein L34</fullName>
    </alternativeName>
</protein>
<keyword id="KW-0687">Ribonucleoprotein</keyword>
<keyword id="KW-0689">Ribosomal protein</keyword>
<gene>
    <name evidence="1" type="primary">rpmH</name>
    <name type="ordered locus">VV1_1004</name>
</gene>
<proteinExistence type="inferred from homology"/>
<comment type="similarity">
    <text evidence="1">Belongs to the bacterial ribosomal protein bL34 family.</text>
</comment>
<accession>Q8DDI4</accession>
<sequence>MATKRTFQPSVLKRKRTHGFRARMATKNGRKVINARRAKGRARLSK</sequence>
<dbReference type="EMBL" id="AE016795">
    <property type="protein sequence ID" value="AAO09493.1"/>
    <property type="molecule type" value="Genomic_DNA"/>
</dbReference>
<dbReference type="RefSeq" id="WP_011079039.1">
    <property type="nucleotide sequence ID" value="NC_004459.3"/>
</dbReference>
<dbReference type="SMR" id="Q8DDI4"/>
<dbReference type="GeneID" id="95678597"/>
<dbReference type="KEGG" id="vvu:VV1_1004"/>
<dbReference type="HOGENOM" id="CLU_129938_2_0_6"/>
<dbReference type="Proteomes" id="UP000002275">
    <property type="component" value="Chromosome 1"/>
</dbReference>
<dbReference type="GO" id="GO:1990904">
    <property type="term" value="C:ribonucleoprotein complex"/>
    <property type="evidence" value="ECO:0007669"/>
    <property type="project" value="UniProtKB-KW"/>
</dbReference>
<dbReference type="GO" id="GO:0005840">
    <property type="term" value="C:ribosome"/>
    <property type="evidence" value="ECO:0007669"/>
    <property type="project" value="UniProtKB-KW"/>
</dbReference>
<dbReference type="GO" id="GO:0003735">
    <property type="term" value="F:structural constituent of ribosome"/>
    <property type="evidence" value="ECO:0007669"/>
    <property type="project" value="InterPro"/>
</dbReference>
<dbReference type="GO" id="GO:0006412">
    <property type="term" value="P:translation"/>
    <property type="evidence" value="ECO:0007669"/>
    <property type="project" value="UniProtKB-UniRule"/>
</dbReference>
<dbReference type="FunFam" id="1.10.287.3980:FF:000001">
    <property type="entry name" value="Mitochondrial ribosomal protein L34"/>
    <property type="match status" value="1"/>
</dbReference>
<dbReference type="Gene3D" id="1.10.287.3980">
    <property type="match status" value="1"/>
</dbReference>
<dbReference type="HAMAP" id="MF_00391">
    <property type="entry name" value="Ribosomal_bL34"/>
    <property type="match status" value="1"/>
</dbReference>
<dbReference type="InterPro" id="IPR000271">
    <property type="entry name" value="Ribosomal_bL34"/>
</dbReference>
<dbReference type="InterPro" id="IPR020939">
    <property type="entry name" value="Ribosomal_bL34_CS"/>
</dbReference>
<dbReference type="NCBIfam" id="TIGR01030">
    <property type="entry name" value="rpmH_bact"/>
    <property type="match status" value="1"/>
</dbReference>
<dbReference type="PANTHER" id="PTHR14503:SF4">
    <property type="entry name" value="LARGE RIBOSOMAL SUBUNIT PROTEIN BL34M"/>
    <property type="match status" value="1"/>
</dbReference>
<dbReference type="PANTHER" id="PTHR14503">
    <property type="entry name" value="MITOCHONDRIAL RIBOSOMAL PROTEIN 34 FAMILY MEMBER"/>
    <property type="match status" value="1"/>
</dbReference>
<dbReference type="Pfam" id="PF00468">
    <property type="entry name" value="Ribosomal_L34"/>
    <property type="match status" value="1"/>
</dbReference>
<dbReference type="PROSITE" id="PS00784">
    <property type="entry name" value="RIBOSOMAL_L34"/>
    <property type="match status" value="1"/>
</dbReference>
<organism>
    <name type="scientific">Vibrio vulnificus (strain CMCP6)</name>
    <dbReference type="NCBI Taxonomy" id="216895"/>
    <lineage>
        <taxon>Bacteria</taxon>
        <taxon>Pseudomonadati</taxon>
        <taxon>Pseudomonadota</taxon>
        <taxon>Gammaproteobacteria</taxon>
        <taxon>Vibrionales</taxon>
        <taxon>Vibrionaceae</taxon>
        <taxon>Vibrio</taxon>
    </lineage>
</organism>